<reference key="1">
    <citation type="journal article" date="2003" name="J. Bacteriol.">
        <title>Complete genome sequence of the oral pathogenic bacterium Porphyromonas gingivalis strain W83.</title>
        <authorList>
            <person name="Nelson K.E."/>
            <person name="Fleischmann R.D."/>
            <person name="DeBoy R.T."/>
            <person name="Paulsen I.T."/>
            <person name="Fouts D.E."/>
            <person name="Eisen J.A."/>
            <person name="Daugherty S.C."/>
            <person name="Dodson R.J."/>
            <person name="Durkin A.S."/>
            <person name="Gwinn M.L."/>
            <person name="Haft D.H."/>
            <person name="Kolonay J.F."/>
            <person name="Nelson W.C."/>
            <person name="Mason T.M."/>
            <person name="Tallon L."/>
            <person name="Gray J."/>
            <person name="Granger D."/>
            <person name="Tettelin H."/>
            <person name="Dong H."/>
            <person name="Galvin J.L."/>
            <person name="Duncan M.J."/>
            <person name="Dewhirst F.E."/>
            <person name="Fraser C.M."/>
        </authorList>
    </citation>
    <scope>NUCLEOTIDE SEQUENCE [LARGE SCALE GENOMIC DNA]</scope>
    <source>
        <strain>ATCC BAA-308 / W83</strain>
    </source>
</reference>
<organism>
    <name type="scientific">Porphyromonas gingivalis (strain ATCC BAA-308 / W83)</name>
    <dbReference type="NCBI Taxonomy" id="242619"/>
    <lineage>
        <taxon>Bacteria</taxon>
        <taxon>Pseudomonadati</taxon>
        <taxon>Bacteroidota</taxon>
        <taxon>Bacteroidia</taxon>
        <taxon>Bacteroidales</taxon>
        <taxon>Porphyromonadaceae</taxon>
        <taxon>Porphyromonas</taxon>
    </lineage>
</organism>
<keyword id="KW-0067">ATP-binding</keyword>
<keyword id="KW-0963">Cytoplasm</keyword>
<keyword id="KW-0418">Kinase</keyword>
<keyword id="KW-0545">Nucleotide biosynthesis</keyword>
<keyword id="KW-0547">Nucleotide-binding</keyword>
<keyword id="KW-1185">Reference proteome</keyword>
<keyword id="KW-0808">Transferase</keyword>
<proteinExistence type="inferred from homology"/>
<comment type="function">
    <text evidence="1">Catalyzes the reversible transfer of the terminal phosphate group between ATP and AMP. Plays an important role in cellular energy homeostasis and in adenine nucleotide metabolism.</text>
</comment>
<comment type="catalytic activity">
    <reaction evidence="1">
        <text>AMP + ATP = 2 ADP</text>
        <dbReference type="Rhea" id="RHEA:12973"/>
        <dbReference type="ChEBI" id="CHEBI:30616"/>
        <dbReference type="ChEBI" id="CHEBI:456215"/>
        <dbReference type="ChEBI" id="CHEBI:456216"/>
        <dbReference type="EC" id="2.7.4.3"/>
    </reaction>
</comment>
<comment type="pathway">
    <text evidence="1">Purine metabolism; AMP biosynthesis via salvage pathway; AMP from ADP: step 1/1.</text>
</comment>
<comment type="subunit">
    <text evidence="1">Monomer.</text>
</comment>
<comment type="subcellular location">
    <subcellularLocation>
        <location evidence="1">Cytoplasm</location>
    </subcellularLocation>
</comment>
<comment type="domain">
    <text evidence="1">Consists of three domains, a large central CORE domain and two small peripheral domains, NMPbind and LID, which undergo movements during catalysis. The LID domain closes over the site of phosphoryl transfer upon ATP binding. Assembling and dissambling the active center during each catalytic cycle provides an effective means to prevent ATP hydrolysis.</text>
</comment>
<comment type="similarity">
    <text evidence="1">Belongs to the adenylate kinase family.</text>
</comment>
<gene>
    <name evidence="1" type="primary">adk</name>
    <name type="ordered locus">PG_0791</name>
</gene>
<sequence length="194" mass="21608">MLNVLIFGAPGSGKGTQSEELIRRYGFRHISTGELLRAEIKAQTELGQAAAGYINEGHLVPDSLIVDMMEKLISTLVDTEGIIFDGFPRTIPQAEAMETMLAHHGWKVDIVLNLQVPEEMLIERLLNRGKVSGRSDDNIETIRKRLDVYANETAPLVDFFTRKNVLHNVVGTGTIEEIALRIAPIVDKFRKVSN</sequence>
<protein>
    <recommendedName>
        <fullName evidence="1">Adenylate kinase</fullName>
        <shortName evidence="1">AK</shortName>
        <ecNumber evidence="1">2.7.4.3</ecNumber>
    </recommendedName>
    <alternativeName>
        <fullName evidence="1">ATP-AMP transphosphorylase</fullName>
    </alternativeName>
    <alternativeName>
        <fullName evidence="1">ATP:AMP phosphotransferase</fullName>
    </alternativeName>
    <alternativeName>
        <fullName evidence="1">Adenylate monophosphate kinase</fullName>
    </alternativeName>
</protein>
<name>KAD_PORGI</name>
<dbReference type="EC" id="2.7.4.3" evidence="1"/>
<dbReference type="EMBL" id="AE015924">
    <property type="protein sequence ID" value="AAQ65952.1"/>
    <property type="molecule type" value="Genomic_DNA"/>
</dbReference>
<dbReference type="RefSeq" id="WP_005873919.1">
    <property type="nucleotide sequence ID" value="NC_002950.2"/>
</dbReference>
<dbReference type="SMR" id="Q7MW54"/>
<dbReference type="STRING" id="242619.PG_0791"/>
<dbReference type="EnsemblBacteria" id="AAQ65952">
    <property type="protein sequence ID" value="AAQ65952"/>
    <property type="gene ID" value="PG_0791"/>
</dbReference>
<dbReference type="KEGG" id="pgi:PG_0791"/>
<dbReference type="eggNOG" id="COG0563">
    <property type="taxonomic scope" value="Bacteria"/>
</dbReference>
<dbReference type="HOGENOM" id="CLU_032354_4_1_10"/>
<dbReference type="UniPathway" id="UPA00588">
    <property type="reaction ID" value="UER00649"/>
</dbReference>
<dbReference type="Proteomes" id="UP000000588">
    <property type="component" value="Chromosome"/>
</dbReference>
<dbReference type="GO" id="GO:0005737">
    <property type="term" value="C:cytoplasm"/>
    <property type="evidence" value="ECO:0007669"/>
    <property type="project" value="UniProtKB-SubCell"/>
</dbReference>
<dbReference type="GO" id="GO:0004017">
    <property type="term" value="F:adenylate kinase activity"/>
    <property type="evidence" value="ECO:0007669"/>
    <property type="project" value="UniProtKB-UniRule"/>
</dbReference>
<dbReference type="GO" id="GO:0005524">
    <property type="term" value="F:ATP binding"/>
    <property type="evidence" value="ECO:0007669"/>
    <property type="project" value="UniProtKB-UniRule"/>
</dbReference>
<dbReference type="GO" id="GO:0044209">
    <property type="term" value="P:AMP salvage"/>
    <property type="evidence" value="ECO:0007669"/>
    <property type="project" value="UniProtKB-UniRule"/>
</dbReference>
<dbReference type="CDD" id="cd01428">
    <property type="entry name" value="ADK"/>
    <property type="match status" value="1"/>
</dbReference>
<dbReference type="Gene3D" id="3.40.50.300">
    <property type="entry name" value="P-loop containing nucleotide triphosphate hydrolases"/>
    <property type="match status" value="1"/>
</dbReference>
<dbReference type="HAMAP" id="MF_00235">
    <property type="entry name" value="Adenylate_kinase_Adk"/>
    <property type="match status" value="1"/>
</dbReference>
<dbReference type="InterPro" id="IPR000850">
    <property type="entry name" value="Adenylat/UMP-CMP_kin"/>
</dbReference>
<dbReference type="InterPro" id="IPR033690">
    <property type="entry name" value="Adenylat_kinase_CS"/>
</dbReference>
<dbReference type="InterPro" id="IPR027417">
    <property type="entry name" value="P-loop_NTPase"/>
</dbReference>
<dbReference type="NCBIfam" id="NF001381">
    <property type="entry name" value="PRK00279.1-3"/>
    <property type="match status" value="1"/>
</dbReference>
<dbReference type="NCBIfam" id="NF011100">
    <property type="entry name" value="PRK14527.1"/>
    <property type="match status" value="1"/>
</dbReference>
<dbReference type="NCBIfam" id="NF011104">
    <property type="entry name" value="PRK14531.1"/>
    <property type="match status" value="1"/>
</dbReference>
<dbReference type="NCBIfam" id="NF011105">
    <property type="entry name" value="PRK14532.1"/>
    <property type="match status" value="1"/>
</dbReference>
<dbReference type="PANTHER" id="PTHR23359">
    <property type="entry name" value="NUCLEOTIDE KINASE"/>
    <property type="match status" value="1"/>
</dbReference>
<dbReference type="Pfam" id="PF00406">
    <property type="entry name" value="ADK"/>
    <property type="match status" value="1"/>
</dbReference>
<dbReference type="PRINTS" id="PR00094">
    <property type="entry name" value="ADENYLTKNASE"/>
</dbReference>
<dbReference type="SUPFAM" id="SSF52540">
    <property type="entry name" value="P-loop containing nucleoside triphosphate hydrolases"/>
    <property type="match status" value="1"/>
</dbReference>
<dbReference type="PROSITE" id="PS00113">
    <property type="entry name" value="ADENYLATE_KINASE"/>
    <property type="match status" value="1"/>
</dbReference>
<evidence type="ECO:0000255" key="1">
    <source>
        <dbReference type="HAMAP-Rule" id="MF_00235"/>
    </source>
</evidence>
<accession>Q7MW54</accession>
<feature type="chain" id="PRO_0000158825" description="Adenylate kinase">
    <location>
        <begin position="1"/>
        <end position="194"/>
    </location>
</feature>
<feature type="region of interest" description="NMP" evidence="1">
    <location>
        <begin position="31"/>
        <end position="60"/>
    </location>
</feature>
<feature type="region of interest" description="LID" evidence="1">
    <location>
        <begin position="127"/>
        <end position="137"/>
    </location>
</feature>
<feature type="binding site" evidence="1">
    <location>
        <begin position="11"/>
        <end position="16"/>
    </location>
    <ligand>
        <name>ATP</name>
        <dbReference type="ChEBI" id="CHEBI:30616"/>
    </ligand>
</feature>
<feature type="binding site" evidence="1">
    <location>
        <position position="32"/>
    </location>
    <ligand>
        <name>AMP</name>
        <dbReference type="ChEBI" id="CHEBI:456215"/>
    </ligand>
</feature>
<feature type="binding site" evidence="1">
    <location>
        <position position="37"/>
    </location>
    <ligand>
        <name>AMP</name>
        <dbReference type="ChEBI" id="CHEBI:456215"/>
    </ligand>
</feature>
<feature type="binding site" evidence="1">
    <location>
        <begin position="58"/>
        <end position="60"/>
    </location>
    <ligand>
        <name>AMP</name>
        <dbReference type="ChEBI" id="CHEBI:456215"/>
    </ligand>
</feature>
<feature type="binding site" evidence="1">
    <location>
        <begin position="86"/>
        <end position="89"/>
    </location>
    <ligand>
        <name>AMP</name>
        <dbReference type="ChEBI" id="CHEBI:456215"/>
    </ligand>
</feature>
<feature type="binding site" evidence="1">
    <location>
        <position position="93"/>
    </location>
    <ligand>
        <name>AMP</name>
        <dbReference type="ChEBI" id="CHEBI:456215"/>
    </ligand>
</feature>
<feature type="binding site" evidence="1">
    <location>
        <position position="128"/>
    </location>
    <ligand>
        <name>ATP</name>
        <dbReference type="ChEBI" id="CHEBI:30616"/>
    </ligand>
</feature>
<feature type="binding site" evidence="1">
    <location>
        <position position="134"/>
    </location>
    <ligand>
        <name>AMP</name>
        <dbReference type="ChEBI" id="CHEBI:456215"/>
    </ligand>
</feature>
<feature type="binding site" evidence="1">
    <location>
        <position position="145"/>
    </location>
    <ligand>
        <name>AMP</name>
        <dbReference type="ChEBI" id="CHEBI:456215"/>
    </ligand>
</feature>
<feature type="binding site" evidence="1">
    <location>
        <position position="173"/>
    </location>
    <ligand>
        <name>ATP</name>
        <dbReference type="ChEBI" id="CHEBI:30616"/>
    </ligand>
</feature>